<gene>
    <name evidence="1" type="primary">hisA</name>
    <name type="ordered locus">LBF_0843</name>
</gene>
<feature type="chain" id="PRO_1000135127" description="1-(5-phosphoribosyl)-5-[(5-phosphoribosylamino)methylideneamino] imidazole-4-carboxamide isomerase">
    <location>
        <begin position="1"/>
        <end position="247"/>
    </location>
</feature>
<feature type="active site" description="Proton acceptor" evidence="1">
    <location>
        <position position="8"/>
    </location>
</feature>
<feature type="active site" description="Proton donor" evidence="1">
    <location>
        <position position="130"/>
    </location>
</feature>
<dbReference type="EC" id="5.3.1.16" evidence="1"/>
<dbReference type="EMBL" id="CP000777">
    <property type="protein sequence ID" value="ABZ93376.1"/>
    <property type="molecule type" value="Genomic_DNA"/>
</dbReference>
<dbReference type="RefSeq" id="WP_012387885.1">
    <property type="nucleotide sequence ID" value="NC_010842.1"/>
</dbReference>
<dbReference type="SMR" id="B0SDS6"/>
<dbReference type="KEGG" id="lbf:LBF_0843"/>
<dbReference type="HOGENOM" id="CLU_048577_1_2_12"/>
<dbReference type="UniPathway" id="UPA00031">
    <property type="reaction ID" value="UER00009"/>
</dbReference>
<dbReference type="GO" id="GO:0005737">
    <property type="term" value="C:cytoplasm"/>
    <property type="evidence" value="ECO:0007669"/>
    <property type="project" value="UniProtKB-SubCell"/>
</dbReference>
<dbReference type="GO" id="GO:0003949">
    <property type="term" value="F:1-(5-phosphoribosyl)-5-[(5-phosphoribosylamino)methylideneamino]imidazole-4-carboxamide isomerase activity"/>
    <property type="evidence" value="ECO:0007669"/>
    <property type="project" value="UniProtKB-UniRule"/>
</dbReference>
<dbReference type="GO" id="GO:0000105">
    <property type="term" value="P:L-histidine biosynthetic process"/>
    <property type="evidence" value="ECO:0007669"/>
    <property type="project" value="UniProtKB-UniRule"/>
</dbReference>
<dbReference type="GO" id="GO:0000162">
    <property type="term" value="P:L-tryptophan biosynthetic process"/>
    <property type="evidence" value="ECO:0007669"/>
    <property type="project" value="TreeGrafter"/>
</dbReference>
<dbReference type="CDD" id="cd04732">
    <property type="entry name" value="HisA"/>
    <property type="match status" value="1"/>
</dbReference>
<dbReference type="FunFam" id="3.20.20.70:FF:000009">
    <property type="entry name" value="1-(5-phosphoribosyl)-5-[(5-phosphoribosylamino)methylideneamino] imidazole-4-carboxamide isomerase"/>
    <property type="match status" value="1"/>
</dbReference>
<dbReference type="Gene3D" id="3.20.20.70">
    <property type="entry name" value="Aldolase class I"/>
    <property type="match status" value="1"/>
</dbReference>
<dbReference type="HAMAP" id="MF_01014">
    <property type="entry name" value="HisA"/>
    <property type="match status" value="1"/>
</dbReference>
<dbReference type="InterPro" id="IPR013785">
    <property type="entry name" value="Aldolase_TIM"/>
</dbReference>
<dbReference type="InterPro" id="IPR006062">
    <property type="entry name" value="His_biosynth"/>
</dbReference>
<dbReference type="InterPro" id="IPR006063">
    <property type="entry name" value="HisA_bact_arch"/>
</dbReference>
<dbReference type="InterPro" id="IPR044524">
    <property type="entry name" value="Isoase_HisA-like"/>
</dbReference>
<dbReference type="InterPro" id="IPR023016">
    <property type="entry name" value="Isoase_HisA-like_bact"/>
</dbReference>
<dbReference type="InterPro" id="IPR011060">
    <property type="entry name" value="RibuloseP-bd_barrel"/>
</dbReference>
<dbReference type="NCBIfam" id="TIGR00007">
    <property type="entry name" value="1-(5-phosphoribosyl)-5-[(5-phosphoribosylamino)methylideneamino]imidazole-4-carboxamide isomerase"/>
    <property type="match status" value="1"/>
</dbReference>
<dbReference type="PANTHER" id="PTHR43090">
    <property type="entry name" value="1-(5-PHOSPHORIBOSYL)-5-[(5-PHOSPHORIBOSYLAMINO)METHYLIDENEAMINO] IMIDAZOLE-4-CARBOXAMIDE ISOMERASE"/>
    <property type="match status" value="1"/>
</dbReference>
<dbReference type="PANTHER" id="PTHR43090:SF2">
    <property type="entry name" value="1-(5-PHOSPHORIBOSYL)-5-[(5-PHOSPHORIBOSYLAMINO)METHYLIDENEAMINO] IMIDAZOLE-4-CARBOXAMIDE ISOMERASE"/>
    <property type="match status" value="1"/>
</dbReference>
<dbReference type="Pfam" id="PF00977">
    <property type="entry name" value="His_biosynth"/>
    <property type="match status" value="1"/>
</dbReference>
<dbReference type="SUPFAM" id="SSF51366">
    <property type="entry name" value="Ribulose-phoshate binding barrel"/>
    <property type="match status" value="1"/>
</dbReference>
<accession>B0SDS6</accession>
<protein>
    <recommendedName>
        <fullName evidence="1">1-(5-phosphoribosyl)-5-[(5-phosphoribosylamino)methylideneamino] imidazole-4-carboxamide isomerase</fullName>
        <ecNumber evidence="1">5.3.1.16</ecNumber>
    </recommendedName>
    <alternativeName>
        <fullName evidence="1">Phosphoribosylformimino-5-aminoimidazole carboxamide ribotide isomerase</fullName>
    </alternativeName>
</protein>
<keyword id="KW-0028">Amino-acid biosynthesis</keyword>
<keyword id="KW-0963">Cytoplasm</keyword>
<keyword id="KW-0368">Histidine biosynthesis</keyword>
<keyword id="KW-0413">Isomerase</keyword>
<comment type="catalytic activity">
    <reaction evidence="1">
        <text>1-(5-phospho-beta-D-ribosyl)-5-[(5-phospho-beta-D-ribosylamino)methylideneamino]imidazole-4-carboxamide = 5-[(5-phospho-1-deoxy-D-ribulos-1-ylimino)methylamino]-1-(5-phospho-beta-D-ribosyl)imidazole-4-carboxamide</text>
        <dbReference type="Rhea" id="RHEA:15469"/>
        <dbReference type="ChEBI" id="CHEBI:58435"/>
        <dbReference type="ChEBI" id="CHEBI:58525"/>
        <dbReference type="EC" id="5.3.1.16"/>
    </reaction>
</comment>
<comment type="pathway">
    <text evidence="1">Amino-acid biosynthesis; L-histidine biosynthesis; L-histidine from 5-phospho-alpha-D-ribose 1-diphosphate: step 4/9.</text>
</comment>
<comment type="subcellular location">
    <subcellularLocation>
        <location evidence="1">Cytoplasm</location>
    </subcellularLocation>
</comment>
<comment type="similarity">
    <text evidence="1">Belongs to the HisA/HisF family.</text>
</comment>
<evidence type="ECO:0000255" key="1">
    <source>
        <dbReference type="HAMAP-Rule" id="MF_01014"/>
    </source>
</evidence>
<name>HIS4_LEPBA</name>
<sequence length="247" mass="27273">MLVLPAIDLLDNEAVRLLQGDYSKKTVYSSSPEKMIQVFEEQGATLIHIVDLNAAKTGKSENEKTIKKIKEKCTVDLELGGGIRTIDNMKFYDGLGVSRLILGTVAVEEPNVVEKAVSLFGQDRIVIGVDAKNGYVRTKGWESNSGILYKDFLTTMYGMGIRHVIFTDIARDGMMEGPNTLAYAELLETFPDLQLVASGGVSSKEDLVELYDKTNGKLFGAITGKAIYEGKLDLKESIRILNQKREK</sequence>
<proteinExistence type="inferred from homology"/>
<organism>
    <name type="scientific">Leptospira biflexa serovar Patoc (strain Patoc 1 / Ames)</name>
    <dbReference type="NCBI Taxonomy" id="355278"/>
    <lineage>
        <taxon>Bacteria</taxon>
        <taxon>Pseudomonadati</taxon>
        <taxon>Spirochaetota</taxon>
        <taxon>Spirochaetia</taxon>
        <taxon>Leptospirales</taxon>
        <taxon>Leptospiraceae</taxon>
        <taxon>Leptospira</taxon>
    </lineage>
</organism>
<reference key="1">
    <citation type="journal article" date="2008" name="PLoS ONE">
        <title>Genome sequence of the saprophyte Leptospira biflexa provides insights into the evolution of Leptospira and the pathogenesis of leptospirosis.</title>
        <authorList>
            <person name="Picardeau M."/>
            <person name="Bulach D.M."/>
            <person name="Bouchier C."/>
            <person name="Zuerner R.L."/>
            <person name="Zidane N."/>
            <person name="Wilson P.J."/>
            <person name="Creno S."/>
            <person name="Kuczek E.S."/>
            <person name="Bommezzadri S."/>
            <person name="Davis J.C."/>
            <person name="McGrath A."/>
            <person name="Johnson M.J."/>
            <person name="Boursaux-Eude C."/>
            <person name="Seemann T."/>
            <person name="Rouy Z."/>
            <person name="Coppel R.L."/>
            <person name="Rood J.I."/>
            <person name="Lajus A."/>
            <person name="Davies J.K."/>
            <person name="Medigue C."/>
            <person name="Adler B."/>
        </authorList>
    </citation>
    <scope>NUCLEOTIDE SEQUENCE [LARGE SCALE GENOMIC DNA]</scope>
    <source>
        <strain>Patoc 1 / Ames</strain>
    </source>
</reference>